<organism>
    <name type="scientific">Mesostigma viride</name>
    <name type="common">Green alga</name>
    <dbReference type="NCBI Taxonomy" id="41882"/>
    <lineage>
        <taxon>Eukaryota</taxon>
        <taxon>Viridiplantae</taxon>
        <taxon>Streptophyta</taxon>
        <taxon>Mesostigmatophyceae</taxon>
        <taxon>Mesostigmatales</taxon>
        <taxon>Mesostigmataceae</taxon>
        <taxon>Mesostigma</taxon>
    </lineage>
</organism>
<feature type="chain" id="PRO_0000118019" description="NAD(P)H-quinone oxidoreductase chain 4, chloroplastic">
    <location>
        <begin position="1"/>
        <end position="507"/>
    </location>
</feature>
<feature type="transmembrane region" description="Helical" evidence="1">
    <location>
        <begin position="4"/>
        <end position="24"/>
    </location>
</feature>
<feature type="transmembrane region" description="Helical" evidence="1">
    <location>
        <begin position="34"/>
        <end position="54"/>
    </location>
</feature>
<feature type="transmembrane region" description="Helical" evidence="1">
    <location>
        <begin position="87"/>
        <end position="107"/>
    </location>
</feature>
<feature type="transmembrane region" description="Helical" evidence="1">
    <location>
        <begin position="111"/>
        <end position="131"/>
    </location>
</feature>
<feature type="transmembrane region" description="Helical" evidence="1">
    <location>
        <begin position="134"/>
        <end position="154"/>
    </location>
</feature>
<feature type="transmembrane region" description="Helical" evidence="1">
    <location>
        <begin position="167"/>
        <end position="187"/>
    </location>
</feature>
<feature type="transmembrane region" description="Helical" evidence="1">
    <location>
        <begin position="210"/>
        <end position="230"/>
    </location>
</feature>
<feature type="transmembrane region" description="Helical" evidence="1">
    <location>
        <begin position="241"/>
        <end position="261"/>
    </location>
</feature>
<feature type="transmembrane region" description="Helical" evidence="1">
    <location>
        <begin position="273"/>
        <end position="293"/>
    </location>
</feature>
<feature type="transmembrane region" description="Helical" evidence="1">
    <location>
        <begin position="312"/>
        <end position="332"/>
    </location>
</feature>
<feature type="transmembrane region" description="Helical" evidence="1">
    <location>
        <begin position="333"/>
        <end position="353"/>
    </location>
</feature>
<feature type="transmembrane region" description="Helical" evidence="1">
    <location>
        <begin position="383"/>
        <end position="403"/>
    </location>
</feature>
<feature type="transmembrane region" description="Helical" evidence="1">
    <location>
        <begin position="416"/>
        <end position="436"/>
    </location>
</feature>
<feature type="transmembrane region" description="Helical" evidence="1">
    <location>
        <begin position="462"/>
        <end position="482"/>
    </location>
</feature>
<gene>
    <name type="primary">ndhD</name>
</gene>
<geneLocation type="chloroplast"/>
<dbReference type="EC" id="7.1.1.-"/>
<dbReference type="EMBL" id="AF166114">
    <property type="protein sequence ID" value="AAF43872.1"/>
    <property type="molecule type" value="Genomic_DNA"/>
</dbReference>
<dbReference type="RefSeq" id="NP_038432.1">
    <property type="nucleotide sequence ID" value="NC_002186.1"/>
</dbReference>
<dbReference type="SMR" id="Q9MUM8"/>
<dbReference type="GeneID" id="800977"/>
<dbReference type="GO" id="GO:0009535">
    <property type="term" value="C:chloroplast thylakoid membrane"/>
    <property type="evidence" value="ECO:0007669"/>
    <property type="project" value="UniProtKB-SubCell"/>
</dbReference>
<dbReference type="GO" id="GO:0008137">
    <property type="term" value="F:NADH dehydrogenase (ubiquinone) activity"/>
    <property type="evidence" value="ECO:0007669"/>
    <property type="project" value="InterPro"/>
</dbReference>
<dbReference type="GO" id="GO:0048039">
    <property type="term" value="F:ubiquinone binding"/>
    <property type="evidence" value="ECO:0007669"/>
    <property type="project" value="TreeGrafter"/>
</dbReference>
<dbReference type="GO" id="GO:0042773">
    <property type="term" value="P:ATP synthesis coupled electron transport"/>
    <property type="evidence" value="ECO:0007669"/>
    <property type="project" value="InterPro"/>
</dbReference>
<dbReference type="GO" id="GO:0015990">
    <property type="term" value="P:electron transport coupled proton transport"/>
    <property type="evidence" value="ECO:0007669"/>
    <property type="project" value="TreeGrafter"/>
</dbReference>
<dbReference type="HAMAP" id="MF_00491">
    <property type="entry name" value="NDH1_NuoM"/>
    <property type="match status" value="1"/>
</dbReference>
<dbReference type="InterPro" id="IPR022997">
    <property type="entry name" value="NADH_Q_OxRdtase_chain4"/>
</dbReference>
<dbReference type="InterPro" id="IPR010227">
    <property type="entry name" value="NADH_Q_OxRdtase_chainM/4"/>
</dbReference>
<dbReference type="InterPro" id="IPR003918">
    <property type="entry name" value="NADH_UbQ_OxRdtase"/>
</dbReference>
<dbReference type="InterPro" id="IPR001750">
    <property type="entry name" value="ND/Mrp_TM"/>
</dbReference>
<dbReference type="NCBIfam" id="TIGR01972">
    <property type="entry name" value="NDH_I_M"/>
    <property type="match status" value="1"/>
</dbReference>
<dbReference type="NCBIfam" id="NF002713">
    <property type="entry name" value="PRK02546.1"/>
    <property type="match status" value="1"/>
</dbReference>
<dbReference type="NCBIfam" id="NF009212">
    <property type="entry name" value="PRK12561.1"/>
    <property type="match status" value="1"/>
</dbReference>
<dbReference type="PANTHER" id="PTHR43507:SF21">
    <property type="entry name" value="NAD(P)H-QUINONE OXIDOREDUCTASE CHAIN 4, CHLOROPLASTIC"/>
    <property type="match status" value="1"/>
</dbReference>
<dbReference type="PANTHER" id="PTHR43507">
    <property type="entry name" value="NADH-UBIQUINONE OXIDOREDUCTASE CHAIN 4"/>
    <property type="match status" value="1"/>
</dbReference>
<dbReference type="Pfam" id="PF00361">
    <property type="entry name" value="Proton_antipo_M"/>
    <property type="match status" value="1"/>
</dbReference>
<dbReference type="PRINTS" id="PR01437">
    <property type="entry name" value="NUOXDRDTASE4"/>
</dbReference>
<reference key="1">
    <citation type="journal article" date="2000" name="Nature">
        <title>Ancestral chloroplast genome in Mesostigma viride reveals an early branch of green plant evolution.</title>
        <authorList>
            <person name="Lemieux C."/>
            <person name="Otis C."/>
            <person name="Turmel M."/>
        </authorList>
    </citation>
    <scope>NUCLEOTIDE SEQUENCE [LARGE SCALE GENOMIC DNA]</scope>
    <source>
        <strain>NIES-296 / KY-14 / CCMP 2046</strain>
    </source>
</reference>
<sequence length="507" mass="56901">MNNFPWITSIVMLPILAGLLIPFIPDENGKNVRWYALGIGLLDFLLISYIFGYKYNIQDTSLQLIDDYEWISSINFHWRLGIDGLSIPLILLTGFITTLAMLGAWPIQKNAKLFYFLMLAMYSGQLGVFASQDLLLFFLMWELELIPIYILLIIWGGKKRLYAATKFILYTALGSIFILIAAFGMAFYGENMSFDMQILGEKEYPINLEILFYICFLIAYAVKLPAFPVHTWLPDTHGEAHYSTCMLLAGILLKMGGYALIRINMNMLPNAHIYFAPYLAIIGVINIIYAALTSFAQRNIKRKIAYSSISHMGFVLIGISSFTDIGLSGAMLQMVSHGLIGASLFFLAGTTYDRTRTLILEDMGGIAKYMPKIFAMFTTCSLASLALPGMSGFVAELMVFLGFANSNAYSIEFRGIITFLEAIGIIVTPIYLLSMLRQVFYGSENLKLLKVNNLIDASAREIFIISCLLVPVIGIGIYPRILTQIYDLKTNAIIEHLEIIRSNSQIM</sequence>
<evidence type="ECO:0000255" key="1"/>
<evidence type="ECO:0000305" key="2"/>
<accession>Q9MUM8</accession>
<keyword id="KW-0150">Chloroplast</keyword>
<keyword id="KW-0472">Membrane</keyword>
<keyword id="KW-0520">NAD</keyword>
<keyword id="KW-0521">NADP</keyword>
<keyword id="KW-0934">Plastid</keyword>
<keyword id="KW-0618">Plastoquinone</keyword>
<keyword id="KW-0874">Quinone</keyword>
<keyword id="KW-0793">Thylakoid</keyword>
<keyword id="KW-1278">Translocase</keyword>
<keyword id="KW-0812">Transmembrane</keyword>
<keyword id="KW-1133">Transmembrane helix</keyword>
<proteinExistence type="inferred from homology"/>
<name>NU4C_MESVI</name>
<comment type="catalytic activity">
    <reaction>
        <text>a plastoquinone + NADH + (n+1) H(+)(in) = a plastoquinol + NAD(+) + n H(+)(out)</text>
        <dbReference type="Rhea" id="RHEA:42608"/>
        <dbReference type="Rhea" id="RHEA-COMP:9561"/>
        <dbReference type="Rhea" id="RHEA-COMP:9562"/>
        <dbReference type="ChEBI" id="CHEBI:15378"/>
        <dbReference type="ChEBI" id="CHEBI:17757"/>
        <dbReference type="ChEBI" id="CHEBI:57540"/>
        <dbReference type="ChEBI" id="CHEBI:57945"/>
        <dbReference type="ChEBI" id="CHEBI:62192"/>
    </reaction>
</comment>
<comment type="catalytic activity">
    <reaction>
        <text>a plastoquinone + NADPH + (n+1) H(+)(in) = a plastoquinol + NADP(+) + n H(+)(out)</text>
        <dbReference type="Rhea" id="RHEA:42612"/>
        <dbReference type="Rhea" id="RHEA-COMP:9561"/>
        <dbReference type="Rhea" id="RHEA-COMP:9562"/>
        <dbReference type="ChEBI" id="CHEBI:15378"/>
        <dbReference type="ChEBI" id="CHEBI:17757"/>
        <dbReference type="ChEBI" id="CHEBI:57783"/>
        <dbReference type="ChEBI" id="CHEBI:58349"/>
        <dbReference type="ChEBI" id="CHEBI:62192"/>
    </reaction>
</comment>
<comment type="subcellular location">
    <subcellularLocation>
        <location evidence="2">Plastid</location>
        <location evidence="2">Chloroplast thylakoid membrane</location>
        <topology evidence="2">Multi-pass membrane protein</topology>
    </subcellularLocation>
</comment>
<comment type="similarity">
    <text evidence="2">Belongs to the complex I subunit 4 family.</text>
</comment>
<protein>
    <recommendedName>
        <fullName>NAD(P)H-quinone oxidoreductase chain 4, chloroplastic</fullName>
        <ecNumber>7.1.1.-</ecNumber>
    </recommendedName>
    <alternativeName>
        <fullName>NAD(P)H dehydrogenase, chain 4</fullName>
    </alternativeName>
    <alternativeName>
        <fullName>NADH-plastoquinone oxidoreductase chain 4</fullName>
    </alternativeName>
</protein>